<sequence length="37" mass="4305">MKVRPSVKPICEKCKVIKRKGRVMVICENPKHKQKQG</sequence>
<comment type="similarity">
    <text evidence="1">Belongs to the bacterial ribosomal protein bL36 family.</text>
</comment>
<evidence type="ECO:0000255" key="1">
    <source>
        <dbReference type="HAMAP-Rule" id="MF_00251"/>
    </source>
</evidence>
<evidence type="ECO:0000305" key="2"/>
<feature type="chain" id="PRO_1000101019" description="Large ribosomal subunit protein bL36">
    <location>
        <begin position="1"/>
        <end position="37"/>
    </location>
</feature>
<organism>
    <name type="scientific">Clostridium botulinum (strain Eklund 17B / Type B)</name>
    <dbReference type="NCBI Taxonomy" id="935198"/>
    <lineage>
        <taxon>Bacteria</taxon>
        <taxon>Bacillati</taxon>
        <taxon>Bacillota</taxon>
        <taxon>Clostridia</taxon>
        <taxon>Eubacteriales</taxon>
        <taxon>Clostridiaceae</taxon>
        <taxon>Clostridium</taxon>
    </lineage>
</organism>
<keyword id="KW-0687">Ribonucleoprotein</keyword>
<keyword id="KW-0689">Ribosomal protein</keyword>
<name>RL36_CLOBB</name>
<gene>
    <name evidence="1" type="primary">rpmJ</name>
    <name type="ordered locus">CLL_A0263</name>
</gene>
<accession>B2TIK0</accession>
<dbReference type="EMBL" id="CP001056">
    <property type="protein sequence ID" value="ACD23940.1"/>
    <property type="molecule type" value="Genomic_DNA"/>
</dbReference>
<dbReference type="SMR" id="B2TIK0"/>
<dbReference type="KEGG" id="cbk:CLL_A0263"/>
<dbReference type="PATRIC" id="fig|935198.13.peg.238"/>
<dbReference type="HOGENOM" id="CLU_135723_6_2_9"/>
<dbReference type="Proteomes" id="UP000001195">
    <property type="component" value="Chromosome"/>
</dbReference>
<dbReference type="GO" id="GO:0005737">
    <property type="term" value="C:cytoplasm"/>
    <property type="evidence" value="ECO:0007669"/>
    <property type="project" value="UniProtKB-ARBA"/>
</dbReference>
<dbReference type="GO" id="GO:1990904">
    <property type="term" value="C:ribonucleoprotein complex"/>
    <property type="evidence" value="ECO:0007669"/>
    <property type="project" value="UniProtKB-KW"/>
</dbReference>
<dbReference type="GO" id="GO:0005840">
    <property type="term" value="C:ribosome"/>
    <property type="evidence" value="ECO:0007669"/>
    <property type="project" value="UniProtKB-KW"/>
</dbReference>
<dbReference type="GO" id="GO:0003735">
    <property type="term" value="F:structural constituent of ribosome"/>
    <property type="evidence" value="ECO:0007669"/>
    <property type="project" value="InterPro"/>
</dbReference>
<dbReference type="GO" id="GO:0006412">
    <property type="term" value="P:translation"/>
    <property type="evidence" value="ECO:0007669"/>
    <property type="project" value="UniProtKB-UniRule"/>
</dbReference>
<dbReference type="HAMAP" id="MF_00251">
    <property type="entry name" value="Ribosomal_bL36"/>
    <property type="match status" value="1"/>
</dbReference>
<dbReference type="InterPro" id="IPR000473">
    <property type="entry name" value="Ribosomal_bL36"/>
</dbReference>
<dbReference type="InterPro" id="IPR035977">
    <property type="entry name" value="Ribosomal_bL36_sp"/>
</dbReference>
<dbReference type="NCBIfam" id="TIGR01022">
    <property type="entry name" value="rpmJ_bact"/>
    <property type="match status" value="1"/>
</dbReference>
<dbReference type="PANTHER" id="PTHR42888">
    <property type="entry name" value="50S RIBOSOMAL PROTEIN L36, CHLOROPLASTIC"/>
    <property type="match status" value="1"/>
</dbReference>
<dbReference type="PANTHER" id="PTHR42888:SF1">
    <property type="entry name" value="LARGE RIBOSOMAL SUBUNIT PROTEIN BL36C"/>
    <property type="match status" value="1"/>
</dbReference>
<dbReference type="Pfam" id="PF00444">
    <property type="entry name" value="Ribosomal_L36"/>
    <property type="match status" value="1"/>
</dbReference>
<dbReference type="SUPFAM" id="SSF57840">
    <property type="entry name" value="Ribosomal protein L36"/>
    <property type="match status" value="1"/>
</dbReference>
<dbReference type="PROSITE" id="PS00828">
    <property type="entry name" value="RIBOSOMAL_L36"/>
    <property type="match status" value="1"/>
</dbReference>
<reference key="1">
    <citation type="submission" date="2008-04" db="EMBL/GenBank/DDBJ databases">
        <title>Complete sequence of Clostridium botulinum strain Eklund.</title>
        <authorList>
            <person name="Brinkac L.M."/>
            <person name="Brown J.L."/>
            <person name="Bruce D."/>
            <person name="Detter C."/>
            <person name="Munk C."/>
            <person name="Smith L.A."/>
            <person name="Smith T.J."/>
            <person name="Sutton G."/>
            <person name="Brettin T.S."/>
        </authorList>
    </citation>
    <scope>NUCLEOTIDE SEQUENCE [LARGE SCALE GENOMIC DNA]</scope>
    <source>
        <strain>Eklund 17B / Type B</strain>
    </source>
</reference>
<protein>
    <recommendedName>
        <fullName evidence="1">Large ribosomal subunit protein bL36</fullName>
    </recommendedName>
    <alternativeName>
        <fullName evidence="2">50S ribosomal protein L36</fullName>
    </alternativeName>
</protein>
<proteinExistence type="inferred from homology"/>